<evidence type="ECO:0000250" key="1"/>
<evidence type="ECO:0000255" key="2"/>
<evidence type="ECO:0000255" key="3">
    <source>
        <dbReference type="PROSITE-ProRule" id="PRU00169"/>
    </source>
</evidence>
<evidence type="ECO:0000305" key="4"/>
<reference key="1">
    <citation type="journal article" date="1994" name="Mol. Microbiol.">
        <title>Characterization of spo0A homologues in diverse Bacillus and Clostridium species identifies a probable DNA-binding domain.</title>
        <authorList>
            <person name="Brown D.P."/>
            <person name="Ganova-Raeva L."/>
            <person name="Green B.D."/>
            <person name="Wilkinson S.R."/>
            <person name="Young M."/>
            <person name="Youngman P."/>
        </authorList>
    </citation>
    <scope>NUCLEOTIDE SEQUENCE [GENOMIC DNA]</scope>
    <source>
        <strain>ATCC 8185 / DSM 362 / JCM 20017 / IAM 1031 / NBRC 3331 / NCDO 717 / NCIMB 8598 / NRS 751 / BG</strain>
    </source>
</reference>
<accession>P52929</accession>
<protein>
    <recommendedName>
        <fullName>Stage 0 sporulation protein A</fullName>
    </recommendedName>
</protein>
<proteinExistence type="inferred from homology"/>
<comment type="function">
    <text evidence="1">May play the central regulatory role in sporulation. It may be an element of the effector pathway responsible for the activation of sporulation genes in response to nutritional stress. Spo0A may act in concert with Spo0H (a sigma factor) to control the expression of some genes that are critical to the sporulation process. Repressor of abrB, activator of the spoIIa operon. Binds the DNA sequence 5'-TGNCGAA-3' (0A box) (By similarity).</text>
</comment>
<comment type="cofactor">
    <cofactor evidence="1">
        <name>Ca(2+)</name>
        <dbReference type="ChEBI" id="CHEBI:29108"/>
    </cofactor>
    <text evidence="1">Binds 1 Ca(2+) ion per subunit.</text>
</comment>
<comment type="subcellular location">
    <subcellularLocation>
        <location evidence="4">Cytoplasm</location>
    </subcellularLocation>
</comment>
<comment type="PTM">
    <text evidence="1">Phosphorylated by KinA and KinB.</text>
</comment>
<feature type="chain" id="PRO_0000081236" description="Stage 0 sporulation protein A">
    <location>
        <begin position="1"/>
        <end position="212" status="greater than"/>
    </location>
</feature>
<feature type="domain" description="Response regulatory" evidence="3">
    <location>
        <begin position="5"/>
        <end position="123"/>
    </location>
</feature>
<feature type="DNA-binding region" description="H-T-H motif" evidence="2">
    <location>
        <begin position="194"/>
        <end position="212" status="greater than"/>
    </location>
</feature>
<feature type="binding site" evidence="1">
    <location>
        <position position="10"/>
    </location>
    <ligand>
        <name>Ca(2+)</name>
        <dbReference type="ChEBI" id="CHEBI:29108"/>
    </ligand>
</feature>
<feature type="binding site" evidence="1">
    <location>
        <position position="11"/>
    </location>
    <ligand>
        <name>Ca(2+)</name>
        <dbReference type="ChEBI" id="CHEBI:29108"/>
    </ligand>
</feature>
<feature type="binding site" evidence="1">
    <location>
        <position position="56"/>
    </location>
    <ligand>
        <name>Ca(2+)</name>
        <dbReference type="ChEBI" id="CHEBI:29108"/>
    </ligand>
</feature>
<feature type="modified residue" description="4-aspartylphosphate" evidence="3">
    <location>
        <position position="56"/>
    </location>
</feature>
<feature type="non-terminal residue">
    <location>
        <position position="212"/>
    </location>
</feature>
<gene>
    <name type="primary">spo0A</name>
</gene>
<keyword id="KW-0010">Activator</keyword>
<keyword id="KW-0106">Calcium</keyword>
<keyword id="KW-0963">Cytoplasm</keyword>
<keyword id="KW-0238">DNA-binding</keyword>
<keyword id="KW-0479">Metal-binding</keyword>
<keyword id="KW-0597">Phosphoprotein</keyword>
<keyword id="KW-0678">Repressor</keyword>
<keyword id="KW-0749">Sporulation</keyword>
<keyword id="KW-0804">Transcription</keyword>
<keyword id="KW-0805">Transcription regulation</keyword>
<keyword id="KW-0902">Two-component regulatory system</keyword>
<dbReference type="EMBL" id="U09971">
    <property type="protein sequence ID" value="AAA18872.1"/>
    <property type="molecule type" value="Genomic_DNA"/>
</dbReference>
<dbReference type="SMR" id="P52929"/>
<dbReference type="STRING" id="54914.AV540_04695"/>
<dbReference type="GO" id="GO:0005737">
    <property type="term" value="C:cytoplasm"/>
    <property type="evidence" value="ECO:0007669"/>
    <property type="project" value="UniProtKB-SubCell"/>
</dbReference>
<dbReference type="GO" id="GO:0005509">
    <property type="term" value="F:calcium ion binding"/>
    <property type="evidence" value="ECO:0007669"/>
    <property type="project" value="InterPro"/>
</dbReference>
<dbReference type="GO" id="GO:0003677">
    <property type="term" value="F:DNA binding"/>
    <property type="evidence" value="ECO:0007669"/>
    <property type="project" value="UniProtKB-KW"/>
</dbReference>
<dbReference type="GO" id="GO:0003700">
    <property type="term" value="F:DNA-binding transcription factor activity"/>
    <property type="evidence" value="ECO:0007669"/>
    <property type="project" value="InterPro"/>
</dbReference>
<dbReference type="GO" id="GO:0051606">
    <property type="term" value="P:detection of stimulus"/>
    <property type="evidence" value="ECO:0007669"/>
    <property type="project" value="InterPro"/>
</dbReference>
<dbReference type="GO" id="GO:0000160">
    <property type="term" value="P:phosphorelay signal transduction system"/>
    <property type="evidence" value="ECO:0007669"/>
    <property type="project" value="UniProtKB-KW"/>
</dbReference>
<dbReference type="GO" id="GO:0042173">
    <property type="term" value="P:regulation of sporulation resulting in formation of a cellular spore"/>
    <property type="evidence" value="ECO:0007669"/>
    <property type="project" value="InterPro"/>
</dbReference>
<dbReference type="GO" id="GO:0030435">
    <property type="term" value="P:sporulation resulting in formation of a cellular spore"/>
    <property type="evidence" value="ECO:0007669"/>
    <property type="project" value="UniProtKB-KW"/>
</dbReference>
<dbReference type="CDD" id="cd17561">
    <property type="entry name" value="REC_Spo0A"/>
    <property type="match status" value="1"/>
</dbReference>
<dbReference type="Gene3D" id="3.40.50.2300">
    <property type="match status" value="1"/>
</dbReference>
<dbReference type="Gene3D" id="1.10.10.10">
    <property type="entry name" value="Winged helix-like DNA-binding domain superfamily/Winged helix DNA-binding domain"/>
    <property type="match status" value="1"/>
</dbReference>
<dbReference type="InterPro" id="IPR011006">
    <property type="entry name" value="CheY-like_superfamily"/>
</dbReference>
<dbReference type="InterPro" id="IPR016032">
    <property type="entry name" value="Sig_transdc_resp-reg_C-effctor"/>
</dbReference>
<dbReference type="InterPro" id="IPR001789">
    <property type="entry name" value="Sig_transdc_resp-reg_receiver"/>
</dbReference>
<dbReference type="InterPro" id="IPR014879">
    <property type="entry name" value="Spo0A_C"/>
</dbReference>
<dbReference type="InterPro" id="IPR012052">
    <property type="entry name" value="Spore_0_A"/>
</dbReference>
<dbReference type="InterPro" id="IPR052048">
    <property type="entry name" value="ST_Response_Regulator"/>
</dbReference>
<dbReference type="InterPro" id="IPR036388">
    <property type="entry name" value="WH-like_DNA-bd_sf"/>
</dbReference>
<dbReference type="NCBIfam" id="TIGR02875">
    <property type="entry name" value="spore_0_A"/>
    <property type="match status" value="1"/>
</dbReference>
<dbReference type="PANTHER" id="PTHR43228:SF5">
    <property type="entry name" value="STAGE 0 SPORULATION PROTEIN A"/>
    <property type="match status" value="1"/>
</dbReference>
<dbReference type="PANTHER" id="PTHR43228">
    <property type="entry name" value="TWO-COMPONENT RESPONSE REGULATOR"/>
    <property type="match status" value="1"/>
</dbReference>
<dbReference type="Pfam" id="PF00072">
    <property type="entry name" value="Response_reg"/>
    <property type="match status" value="1"/>
</dbReference>
<dbReference type="Pfam" id="PF08769">
    <property type="entry name" value="Spo0A_C"/>
    <property type="match status" value="1"/>
</dbReference>
<dbReference type="SMART" id="SM00448">
    <property type="entry name" value="REC"/>
    <property type="match status" value="1"/>
</dbReference>
<dbReference type="SUPFAM" id="SSF46894">
    <property type="entry name" value="C-terminal effector domain of the bipartite response regulators"/>
    <property type="match status" value="1"/>
</dbReference>
<dbReference type="SUPFAM" id="SSF52172">
    <property type="entry name" value="CheY-like"/>
    <property type="match status" value="1"/>
</dbReference>
<dbReference type="PROSITE" id="PS50110">
    <property type="entry name" value="RESPONSE_REGULATORY"/>
    <property type="match status" value="1"/>
</dbReference>
<name>SP0A_BREPA</name>
<sequence length="212" mass="23843">MSKIEVLLADDNREFVSLLEEYISSQYDMNVIGVAYNGNEVVRLLQERVPDVLILDIIMPHLDGLAVLEQIQAMRLSPQPKIIMLTAFGQEEITKKAVELGAAYYILKPFDMEVLAQRIRQIITTKPASSFVTSVKPQSTLQVRGRNLDASITSIIHEIGVPAHIKGYLYLREAITMVYNDVELLGSITKVLYPDIAKKFNTTASHVERAIR</sequence>
<organism>
    <name type="scientific">Brevibacillus parabrevis</name>
    <dbReference type="NCBI Taxonomy" id="54914"/>
    <lineage>
        <taxon>Bacteria</taxon>
        <taxon>Bacillati</taxon>
        <taxon>Bacillota</taxon>
        <taxon>Bacilli</taxon>
        <taxon>Bacillales</taxon>
        <taxon>Paenibacillaceae</taxon>
        <taxon>Brevibacillus</taxon>
    </lineage>
</organism>